<keyword id="KW-0249">Electron transport</keyword>
<keyword id="KW-0813">Transport</keyword>
<protein>
    <recommendedName>
        <fullName evidence="1">Protein FixA</fullName>
    </recommendedName>
</protein>
<evidence type="ECO:0000255" key="1">
    <source>
        <dbReference type="HAMAP-Rule" id="MF_01055"/>
    </source>
</evidence>
<dbReference type="EMBL" id="CU928163">
    <property type="protein sequence ID" value="CAR11266.1"/>
    <property type="molecule type" value="Genomic_DNA"/>
</dbReference>
<dbReference type="RefSeq" id="WP_000692223.1">
    <property type="nucleotide sequence ID" value="NC_011751.1"/>
</dbReference>
<dbReference type="RefSeq" id="YP_002410821.1">
    <property type="nucleotide sequence ID" value="NC_011751.1"/>
</dbReference>
<dbReference type="SMR" id="B7N7R6"/>
<dbReference type="STRING" id="585056.ECUMN_0043"/>
<dbReference type="KEGG" id="eum:ECUMN_0043"/>
<dbReference type="PATRIC" id="fig|585056.7.peg.230"/>
<dbReference type="HOGENOM" id="CLU_060196_2_2_6"/>
<dbReference type="UniPathway" id="UPA00117"/>
<dbReference type="Proteomes" id="UP000007097">
    <property type="component" value="Chromosome"/>
</dbReference>
<dbReference type="GO" id="GO:0009055">
    <property type="term" value="F:electron transfer activity"/>
    <property type="evidence" value="ECO:0007669"/>
    <property type="project" value="InterPro"/>
</dbReference>
<dbReference type="GO" id="GO:0009437">
    <property type="term" value="P:carnitine metabolic process"/>
    <property type="evidence" value="ECO:0007669"/>
    <property type="project" value="UniProtKB-UniRule"/>
</dbReference>
<dbReference type="CDD" id="cd01714">
    <property type="entry name" value="ETF_beta"/>
    <property type="match status" value="1"/>
</dbReference>
<dbReference type="FunFam" id="3.40.50.620:FF:000072">
    <property type="entry name" value="Protein FixA homolog"/>
    <property type="match status" value="1"/>
</dbReference>
<dbReference type="Gene3D" id="3.40.50.620">
    <property type="entry name" value="HUPs"/>
    <property type="match status" value="1"/>
</dbReference>
<dbReference type="HAMAP" id="MF_01055">
    <property type="entry name" value="FixA"/>
    <property type="match status" value="1"/>
</dbReference>
<dbReference type="InterPro" id="IPR000049">
    <property type="entry name" value="ET-Flavoprotein_bsu_CS"/>
</dbReference>
<dbReference type="InterPro" id="IPR014730">
    <property type="entry name" value="ETF_a/b_N"/>
</dbReference>
<dbReference type="InterPro" id="IPR012255">
    <property type="entry name" value="ETF_b"/>
</dbReference>
<dbReference type="InterPro" id="IPR033948">
    <property type="entry name" value="ETF_beta_N"/>
</dbReference>
<dbReference type="InterPro" id="IPR023463">
    <property type="entry name" value="FixA"/>
</dbReference>
<dbReference type="InterPro" id="IPR014729">
    <property type="entry name" value="Rossmann-like_a/b/a_fold"/>
</dbReference>
<dbReference type="NCBIfam" id="NF002888">
    <property type="entry name" value="PRK03359.1"/>
    <property type="match status" value="1"/>
</dbReference>
<dbReference type="PANTHER" id="PTHR21294">
    <property type="entry name" value="ELECTRON TRANSFER FLAVOPROTEIN BETA-SUBUNIT"/>
    <property type="match status" value="1"/>
</dbReference>
<dbReference type="PANTHER" id="PTHR21294:SF17">
    <property type="entry name" value="PROTEIN FIXA"/>
    <property type="match status" value="1"/>
</dbReference>
<dbReference type="Pfam" id="PF01012">
    <property type="entry name" value="ETF"/>
    <property type="match status" value="1"/>
</dbReference>
<dbReference type="PIRSF" id="PIRSF000090">
    <property type="entry name" value="Beta-ETF"/>
    <property type="match status" value="1"/>
</dbReference>
<dbReference type="SMART" id="SM00893">
    <property type="entry name" value="ETF"/>
    <property type="match status" value="1"/>
</dbReference>
<dbReference type="SUPFAM" id="SSF52402">
    <property type="entry name" value="Adenine nucleotide alpha hydrolases-like"/>
    <property type="match status" value="1"/>
</dbReference>
<dbReference type="PROSITE" id="PS01065">
    <property type="entry name" value="ETF_BETA"/>
    <property type="match status" value="1"/>
</dbReference>
<comment type="function">
    <text evidence="1">Required for anaerobic carnitine reduction. May bring reductant to CaiA.</text>
</comment>
<comment type="pathway">
    <text evidence="1">Amine and polyamine metabolism; carnitine metabolism.</text>
</comment>
<comment type="subunit">
    <text evidence="1">Heterodimer of FixA and FixB.</text>
</comment>
<comment type="similarity">
    <text evidence="1">Belongs to the ETF beta-subunit/FixA family.</text>
</comment>
<name>FIXA_ECOLU</name>
<accession>B7N7R6</accession>
<proteinExistence type="inferred from homology"/>
<reference key="1">
    <citation type="journal article" date="2009" name="PLoS Genet.">
        <title>Organised genome dynamics in the Escherichia coli species results in highly diverse adaptive paths.</title>
        <authorList>
            <person name="Touchon M."/>
            <person name="Hoede C."/>
            <person name="Tenaillon O."/>
            <person name="Barbe V."/>
            <person name="Baeriswyl S."/>
            <person name="Bidet P."/>
            <person name="Bingen E."/>
            <person name="Bonacorsi S."/>
            <person name="Bouchier C."/>
            <person name="Bouvet O."/>
            <person name="Calteau A."/>
            <person name="Chiapello H."/>
            <person name="Clermont O."/>
            <person name="Cruveiller S."/>
            <person name="Danchin A."/>
            <person name="Diard M."/>
            <person name="Dossat C."/>
            <person name="Karoui M.E."/>
            <person name="Frapy E."/>
            <person name="Garry L."/>
            <person name="Ghigo J.M."/>
            <person name="Gilles A.M."/>
            <person name="Johnson J."/>
            <person name="Le Bouguenec C."/>
            <person name="Lescat M."/>
            <person name="Mangenot S."/>
            <person name="Martinez-Jehanne V."/>
            <person name="Matic I."/>
            <person name="Nassif X."/>
            <person name="Oztas S."/>
            <person name="Petit M.A."/>
            <person name="Pichon C."/>
            <person name="Rouy Z."/>
            <person name="Ruf C.S."/>
            <person name="Schneider D."/>
            <person name="Tourret J."/>
            <person name="Vacherie B."/>
            <person name="Vallenet D."/>
            <person name="Medigue C."/>
            <person name="Rocha E.P.C."/>
            <person name="Denamur E."/>
        </authorList>
    </citation>
    <scope>NUCLEOTIDE SEQUENCE [LARGE SCALE GENOMIC DNA]</scope>
    <source>
        <strain>UMN026 / ExPEC</strain>
    </source>
</reference>
<organism>
    <name type="scientific">Escherichia coli O17:K52:H18 (strain UMN026 / ExPEC)</name>
    <dbReference type="NCBI Taxonomy" id="585056"/>
    <lineage>
        <taxon>Bacteria</taxon>
        <taxon>Pseudomonadati</taxon>
        <taxon>Pseudomonadota</taxon>
        <taxon>Gammaproteobacteria</taxon>
        <taxon>Enterobacterales</taxon>
        <taxon>Enterobacteriaceae</taxon>
        <taxon>Escherichia</taxon>
    </lineage>
</organism>
<sequence>MKIITCYKCVPDEQDIAVNNADGSLDFSKADAKISQYDLNAIEAACQLKQQAAEAQVTALSVGGKALTNAKGRKDVLSRGPDELIVVIDDQFERALPQQTATALAAAAQKAGFDLILCGDGSSDLYAQQVGLLVGEILNIPAVNGVSKIISLTADTLTVERELEDETETLSIPLPAVVAVSTDINSPQIPSMKAILGAAKKPVQVWSAADIGFNAEAAWSEQQVAAPKQRERQRIVIEGDGEEQIAAFAENLRKVI</sequence>
<feature type="chain" id="PRO_1000136318" description="Protein FixA">
    <location>
        <begin position="1"/>
        <end position="256"/>
    </location>
</feature>
<gene>
    <name evidence="1" type="primary">fixA</name>
    <name type="ordered locus">ECUMN_0043</name>
</gene>